<comment type="function">
    <text evidence="1">Component of the A-type ATP synthase that produces ATP from ADP in the presence of a proton gradient across the membrane.</text>
</comment>
<comment type="subunit">
    <text evidence="1">Has multiple subunits with at least A(3), B(3), C, D, E, F, H, I and proteolipid K(x).</text>
</comment>
<comment type="subcellular location">
    <subcellularLocation>
        <location evidence="1">Cell membrane</location>
        <topology evidence="1">Peripheral membrane protein</topology>
    </subcellularLocation>
</comment>
<comment type="similarity">
    <text evidence="1">Belongs to the V-ATPase D subunit family.</text>
</comment>
<proteinExistence type="inferred from homology"/>
<gene>
    <name evidence="1" type="primary">atpD</name>
    <name type="ordered locus">Mbur_1245</name>
</gene>
<accession>Q12WK9</accession>
<feature type="chain" id="PRO_1000059163" description="A-type ATP synthase subunit D">
    <location>
        <begin position="1"/>
        <end position="206"/>
    </location>
</feature>
<protein>
    <recommendedName>
        <fullName evidence="1">A-type ATP synthase subunit D</fullName>
    </recommendedName>
</protein>
<keyword id="KW-0066">ATP synthesis</keyword>
<keyword id="KW-1003">Cell membrane</keyword>
<keyword id="KW-0375">Hydrogen ion transport</keyword>
<keyword id="KW-0406">Ion transport</keyword>
<keyword id="KW-0472">Membrane</keyword>
<keyword id="KW-0813">Transport</keyword>
<reference key="1">
    <citation type="journal article" date="2009" name="ISME J.">
        <title>The genome sequence of the psychrophilic archaeon, Methanococcoides burtonii: the role of genome evolution in cold adaptation.</title>
        <authorList>
            <person name="Allen M.A."/>
            <person name="Lauro F.M."/>
            <person name="Williams T.J."/>
            <person name="Burg D."/>
            <person name="Siddiqui K.S."/>
            <person name="De Francisci D."/>
            <person name="Chong K.W."/>
            <person name="Pilak O."/>
            <person name="Chew H.H."/>
            <person name="De Maere M.Z."/>
            <person name="Ting L."/>
            <person name="Katrib M."/>
            <person name="Ng C."/>
            <person name="Sowers K.R."/>
            <person name="Galperin M.Y."/>
            <person name="Anderson I.J."/>
            <person name="Ivanova N."/>
            <person name="Dalin E."/>
            <person name="Martinez M."/>
            <person name="Lapidus A."/>
            <person name="Hauser L."/>
            <person name="Land M."/>
            <person name="Thomas T."/>
            <person name="Cavicchioli R."/>
        </authorList>
    </citation>
    <scope>NUCLEOTIDE SEQUENCE [LARGE SCALE GENOMIC DNA]</scope>
    <source>
        <strain>DSM 6242 / NBRC 107633 / OCM 468 / ACE-M</strain>
    </source>
</reference>
<name>AATD_METBU</name>
<organism>
    <name type="scientific">Methanococcoides burtonii (strain DSM 6242 / NBRC 107633 / OCM 468 / ACE-M)</name>
    <dbReference type="NCBI Taxonomy" id="259564"/>
    <lineage>
        <taxon>Archaea</taxon>
        <taxon>Methanobacteriati</taxon>
        <taxon>Methanobacteriota</taxon>
        <taxon>Stenosarchaea group</taxon>
        <taxon>Methanomicrobia</taxon>
        <taxon>Methanosarcinales</taxon>
        <taxon>Methanosarcinaceae</taxon>
        <taxon>Methanococcoides</taxon>
    </lineage>
</organism>
<evidence type="ECO:0000255" key="1">
    <source>
        <dbReference type="HAMAP-Rule" id="MF_00271"/>
    </source>
</evidence>
<dbReference type="EMBL" id="CP000300">
    <property type="protein sequence ID" value="ABE52167.1"/>
    <property type="molecule type" value="Genomic_DNA"/>
</dbReference>
<dbReference type="RefSeq" id="WP_011499313.1">
    <property type="nucleotide sequence ID" value="NC_007955.1"/>
</dbReference>
<dbReference type="SMR" id="Q12WK9"/>
<dbReference type="STRING" id="259564.Mbur_1245"/>
<dbReference type="GeneID" id="3998569"/>
<dbReference type="KEGG" id="mbu:Mbur_1245"/>
<dbReference type="HOGENOM" id="CLU_069688_2_1_2"/>
<dbReference type="OrthoDB" id="117390at2157"/>
<dbReference type="Proteomes" id="UP000001979">
    <property type="component" value="Chromosome"/>
</dbReference>
<dbReference type="GO" id="GO:0005886">
    <property type="term" value="C:plasma membrane"/>
    <property type="evidence" value="ECO:0007669"/>
    <property type="project" value="UniProtKB-SubCell"/>
</dbReference>
<dbReference type="GO" id="GO:0005524">
    <property type="term" value="F:ATP binding"/>
    <property type="evidence" value="ECO:0007669"/>
    <property type="project" value="UniProtKB-UniRule"/>
</dbReference>
<dbReference type="GO" id="GO:0046933">
    <property type="term" value="F:proton-transporting ATP synthase activity, rotational mechanism"/>
    <property type="evidence" value="ECO:0007669"/>
    <property type="project" value="UniProtKB-UniRule"/>
</dbReference>
<dbReference type="GO" id="GO:0046961">
    <property type="term" value="F:proton-transporting ATPase activity, rotational mechanism"/>
    <property type="evidence" value="ECO:0007669"/>
    <property type="project" value="InterPro"/>
</dbReference>
<dbReference type="GO" id="GO:0042777">
    <property type="term" value="P:proton motive force-driven plasma membrane ATP synthesis"/>
    <property type="evidence" value="ECO:0007669"/>
    <property type="project" value="UniProtKB-UniRule"/>
</dbReference>
<dbReference type="FunFam" id="1.10.287.3240:FF:000007">
    <property type="entry name" value="V-type ATP synthase subunit D"/>
    <property type="match status" value="1"/>
</dbReference>
<dbReference type="Gene3D" id="1.10.287.3240">
    <property type="match status" value="1"/>
</dbReference>
<dbReference type="HAMAP" id="MF_00271">
    <property type="entry name" value="ATP_synth_D_arch"/>
    <property type="match status" value="1"/>
</dbReference>
<dbReference type="InterPro" id="IPR002699">
    <property type="entry name" value="V_ATPase_D"/>
</dbReference>
<dbReference type="NCBIfam" id="NF001542">
    <property type="entry name" value="PRK00373.1-1"/>
    <property type="match status" value="1"/>
</dbReference>
<dbReference type="NCBIfam" id="NF001545">
    <property type="entry name" value="PRK00373.1-4"/>
    <property type="match status" value="1"/>
</dbReference>
<dbReference type="NCBIfam" id="TIGR00309">
    <property type="entry name" value="V_ATPase_subD"/>
    <property type="match status" value="1"/>
</dbReference>
<dbReference type="PANTHER" id="PTHR11671">
    <property type="entry name" value="V-TYPE ATP SYNTHASE SUBUNIT D"/>
    <property type="match status" value="1"/>
</dbReference>
<dbReference type="Pfam" id="PF01813">
    <property type="entry name" value="ATP-synt_D"/>
    <property type="match status" value="1"/>
</dbReference>
<sequence>MGAKEVKPTRSELIELKKKIKLSEGGHKLLKMKRDGLILEFFDILSKAKDVRSELDAAYEKANVKIGIAESVEGRITIKSTAFAMKDAPQIVLESHNIMGVVVPKIESSSVRKPINKRGYGLLGTSSYIDEAVDSYEELVEKIILAAEIETTMKKLLDDIEKTKRRVNALEFKVIPELTEAMVFIRLRLEEMERENTFRLKRIKKA</sequence>